<reference key="1">
    <citation type="journal article" date="2005" name="Mol. Reprod. Dev.">
        <title>Identification and characterization of a novel testicular germ cell-specific gene Ggnbp1.</title>
        <authorList>
            <person name="Zhou Y."/>
            <person name="Zhao Q."/>
            <person name="Bishop C.E."/>
            <person name="Huang P."/>
            <person name="Lu B."/>
        </authorList>
    </citation>
    <scope>NUCLEOTIDE SEQUENCE [MRNA]</scope>
    <source>
        <strain>Sprague-Dawley</strain>
    </source>
</reference>
<reference key="2">
    <citation type="journal article" date="2004" name="Genome Res.">
        <title>The status, quality, and expansion of the NIH full-length cDNA project: the Mammalian Gene Collection (MGC).</title>
        <authorList>
            <consortium name="The MGC Project Team"/>
        </authorList>
    </citation>
    <scope>NUCLEOTIDE SEQUENCE [LARGE SCALE MRNA]</scope>
    <source>
        <tissue>Testis</tissue>
    </source>
</reference>
<dbReference type="EMBL" id="AY529104">
    <property type="protein sequence ID" value="AAS93935.1"/>
    <property type="molecule type" value="mRNA"/>
</dbReference>
<dbReference type="EMBL" id="BC105838">
    <property type="protein sequence ID" value="AAI05839.1"/>
    <property type="molecule type" value="mRNA"/>
</dbReference>
<dbReference type="RefSeq" id="NP_001009972.1">
    <property type="nucleotide sequence ID" value="NM_001009972.1"/>
</dbReference>
<dbReference type="SMR" id="Q5J2D6"/>
<dbReference type="FunCoup" id="Q5J2D6">
    <property type="interactions" value="6"/>
</dbReference>
<dbReference type="STRING" id="10116.ENSRNOP00000000577"/>
<dbReference type="GlyGen" id="Q5J2D6">
    <property type="glycosylation" value="1 site"/>
</dbReference>
<dbReference type="PhosphoSitePlus" id="Q5J2D6"/>
<dbReference type="PaxDb" id="10116-ENSRNOP00000000577"/>
<dbReference type="Ensembl" id="ENSRNOT00000000577.7">
    <property type="protein sequence ID" value="ENSRNOP00000000577.4"/>
    <property type="gene ID" value="ENSRNOG00000000486.7"/>
</dbReference>
<dbReference type="GeneID" id="494520"/>
<dbReference type="KEGG" id="rno:494520"/>
<dbReference type="UCSC" id="RGD:1359729">
    <property type="organism name" value="rat"/>
</dbReference>
<dbReference type="AGR" id="RGD:1359729"/>
<dbReference type="CTD" id="449520"/>
<dbReference type="RGD" id="1359729">
    <property type="gene designation" value="Ggnbp1"/>
</dbReference>
<dbReference type="eggNOG" id="KOG1870">
    <property type="taxonomic scope" value="Eukaryota"/>
</dbReference>
<dbReference type="GeneTree" id="ENSGT00390000006663"/>
<dbReference type="HOGENOM" id="CLU_816260_0_0_1"/>
<dbReference type="InParanoid" id="Q5J2D6"/>
<dbReference type="OMA" id="VGFMESE"/>
<dbReference type="OrthoDB" id="9937592at2759"/>
<dbReference type="PhylomeDB" id="Q5J2D6"/>
<dbReference type="TreeFam" id="TF339395"/>
<dbReference type="PRO" id="PR:Q5J2D6"/>
<dbReference type="Proteomes" id="UP000002494">
    <property type="component" value="Chromosome 20"/>
</dbReference>
<dbReference type="Bgee" id="ENSRNOG00000000486">
    <property type="expression patterns" value="Expressed in testis and 14 other cell types or tissues"/>
</dbReference>
<dbReference type="GO" id="GO:0005794">
    <property type="term" value="C:Golgi apparatus"/>
    <property type="evidence" value="ECO:0000266"/>
    <property type="project" value="RGD"/>
</dbReference>
<dbReference type="GO" id="GO:0005758">
    <property type="term" value="C:mitochondrial intermembrane space"/>
    <property type="evidence" value="ECO:0000250"/>
    <property type="project" value="UniProtKB"/>
</dbReference>
<dbReference type="GO" id="GO:0005886">
    <property type="term" value="C:plasma membrane"/>
    <property type="evidence" value="ECO:0000266"/>
    <property type="project" value="RGD"/>
</dbReference>
<dbReference type="GO" id="GO:0030154">
    <property type="term" value="P:cell differentiation"/>
    <property type="evidence" value="ECO:0007669"/>
    <property type="project" value="UniProtKB-KW"/>
</dbReference>
<dbReference type="GO" id="GO:0000266">
    <property type="term" value="P:mitochondrial fission"/>
    <property type="evidence" value="ECO:0000250"/>
    <property type="project" value="UniProtKB"/>
</dbReference>
<dbReference type="GO" id="GO:0007283">
    <property type="term" value="P:spermatogenesis"/>
    <property type="evidence" value="ECO:0007669"/>
    <property type="project" value="UniProtKB-KW"/>
</dbReference>
<dbReference type="FunFam" id="3.10.20.90:FF:000263">
    <property type="entry name" value="gametogenetin-binding protein 1-like"/>
    <property type="match status" value="1"/>
</dbReference>
<dbReference type="Gene3D" id="3.10.20.90">
    <property type="entry name" value="Phosphatidylinositol 3-kinase Catalytic Subunit, Chain A, domain 1"/>
    <property type="match status" value="1"/>
</dbReference>
<dbReference type="InterPro" id="IPR028135">
    <property type="entry name" value="Ub_USP-typ"/>
</dbReference>
<dbReference type="Pfam" id="PF14836">
    <property type="entry name" value="Ubiquitin_3"/>
    <property type="match status" value="1"/>
</dbReference>
<accession>Q5J2D6</accession>
<gene>
    <name type="primary">Ggnbp1</name>
</gene>
<sequence>MAAQARTPRSRILGCSSMLRFLRSLVGSKGSSKSSNRPLNRSQPSSSPEQDVVSPTMGHQGGCGRKETRPRVLSATSSNGKREPRPRVLSAAPSNQRLRDASGLGTGDTGSQTLTSKDVLKLRAQGVEVTSVPTRGTWEVLEHLPEKKGEEGEPAGEVSGASDRAHFGQALEAEQGCLQWVSGPMVLPPEAFIKEEEDEHCLIDFGDLRLSSCKVGSTPWNYLLGLYKQLQKSAMTKAQRPDADAPQFALKDSSPTEERGEREEAVDESSLKWCAPRASSDDSNLKWCAPRNSTYQSPLQKTFRSTDTVGFVESELKKILAVQREARLWKVGNPEGRELLTQPDITLEEAGMVDGQHLLLEEMDEMGNWPPPE</sequence>
<name>GGNB1_RAT</name>
<keyword id="KW-0963">Cytoplasm</keyword>
<keyword id="KW-0217">Developmental protein</keyword>
<keyword id="KW-0221">Differentiation</keyword>
<keyword id="KW-0333">Golgi apparatus</keyword>
<keyword id="KW-0472">Membrane</keyword>
<keyword id="KW-0496">Mitochondrion</keyword>
<keyword id="KW-1185">Reference proteome</keyword>
<keyword id="KW-0744">Spermatogenesis</keyword>
<organism>
    <name type="scientific">Rattus norvegicus</name>
    <name type="common">Rat</name>
    <dbReference type="NCBI Taxonomy" id="10116"/>
    <lineage>
        <taxon>Eukaryota</taxon>
        <taxon>Metazoa</taxon>
        <taxon>Chordata</taxon>
        <taxon>Craniata</taxon>
        <taxon>Vertebrata</taxon>
        <taxon>Euteleostomi</taxon>
        <taxon>Mammalia</taxon>
        <taxon>Eutheria</taxon>
        <taxon>Euarchontoglires</taxon>
        <taxon>Glires</taxon>
        <taxon>Rodentia</taxon>
        <taxon>Myomorpha</taxon>
        <taxon>Muroidea</taxon>
        <taxon>Muridae</taxon>
        <taxon>Murinae</taxon>
        <taxon>Rattus</taxon>
    </lineage>
</organism>
<evidence type="ECO:0000250" key="1"/>
<evidence type="ECO:0000250" key="2">
    <source>
        <dbReference type="UniProtKB" id="Q6K1E7"/>
    </source>
</evidence>
<evidence type="ECO:0000256" key="3">
    <source>
        <dbReference type="SAM" id="MobiDB-lite"/>
    </source>
</evidence>
<comment type="function">
    <text evidence="1">Induces mitochondrial fragmentation, possibly by promoting DNM1L-dependent fission and may play a role in mitochondrial morphogenesis during spermatogenesis.</text>
</comment>
<comment type="subunit">
    <text evidence="2">Interacts with CCDC159 (By similarity). Interacts with GGN (By similarity).</text>
</comment>
<comment type="subcellular location">
    <subcellularLocation>
        <location evidence="1">Cytoplasm</location>
    </subcellularLocation>
    <subcellularLocation>
        <location evidence="1">Membrane</location>
        <topology evidence="1">Peripheral membrane protein</topology>
    </subcellularLocation>
    <subcellularLocation>
        <location evidence="1">Golgi apparatus</location>
    </subcellularLocation>
    <subcellularLocation>
        <location evidence="1">Mitochondrion intermembrane space</location>
    </subcellularLocation>
</comment>
<comment type="domain">
    <text evidence="1">The N-terminal domain is required for targeting to the mitochondrion.</text>
</comment>
<protein>
    <recommendedName>
        <fullName>Gametogenetin-binding protein 1</fullName>
    </recommendedName>
</protein>
<proteinExistence type="evidence at transcript level"/>
<feature type="chain" id="PRO_0000239347" description="Gametogenetin-binding protein 1">
    <location>
        <begin position="1"/>
        <end position="373"/>
    </location>
</feature>
<feature type="region of interest" description="Disordered" evidence="3">
    <location>
        <begin position="26"/>
        <end position="113"/>
    </location>
</feature>
<feature type="region of interest" description="Required for induction of mitochondrial fragmentation" evidence="1">
    <location>
        <begin position="226"/>
        <end position="373"/>
    </location>
</feature>
<feature type="region of interest" description="Disordered" evidence="3">
    <location>
        <begin position="237"/>
        <end position="268"/>
    </location>
</feature>
<feature type="region of interest" description="Interaction with GGN" evidence="1">
    <location>
        <begin position="301"/>
        <end position="373"/>
    </location>
</feature>
<feature type="compositionally biased region" description="Polar residues" evidence="3">
    <location>
        <begin position="36"/>
        <end position="49"/>
    </location>
</feature>
<feature type="compositionally biased region" description="Basic and acidic residues" evidence="3">
    <location>
        <begin position="254"/>
        <end position="263"/>
    </location>
</feature>